<reference key="1">
    <citation type="journal article" date="2009" name="PLoS Biol.">
        <title>Lineage-specific biology revealed by a finished genome assembly of the mouse.</title>
        <authorList>
            <person name="Church D.M."/>
            <person name="Goodstadt L."/>
            <person name="Hillier L.W."/>
            <person name="Zody M.C."/>
            <person name="Goldstein S."/>
            <person name="She X."/>
            <person name="Bult C.J."/>
            <person name="Agarwala R."/>
            <person name="Cherry J.L."/>
            <person name="DiCuccio M."/>
            <person name="Hlavina W."/>
            <person name="Kapustin Y."/>
            <person name="Meric P."/>
            <person name="Maglott D."/>
            <person name="Birtle Z."/>
            <person name="Marques A.C."/>
            <person name="Graves T."/>
            <person name="Zhou S."/>
            <person name="Teague B."/>
            <person name="Potamousis K."/>
            <person name="Churas C."/>
            <person name="Place M."/>
            <person name="Herschleb J."/>
            <person name="Runnheim R."/>
            <person name="Forrest D."/>
            <person name="Amos-Landgraf J."/>
            <person name="Schwartz D.C."/>
            <person name="Cheng Z."/>
            <person name="Lindblad-Toh K."/>
            <person name="Eichler E.E."/>
            <person name="Ponting C.P."/>
        </authorList>
    </citation>
    <scope>NUCLEOTIDE SEQUENCE [LARGE SCALE GENOMIC DNA]</scope>
    <source>
        <strain>C57BL/6J</strain>
    </source>
</reference>
<reference key="2">
    <citation type="submission" date="2005-07" db="EMBL/GenBank/DDBJ databases">
        <authorList>
            <person name="Mural R.J."/>
            <person name="Adams M.D."/>
            <person name="Myers E.W."/>
            <person name="Smith H.O."/>
            <person name="Venter J.C."/>
        </authorList>
    </citation>
    <scope>NUCLEOTIDE SEQUENCE [LARGE SCALE GENOMIC DNA]</scope>
</reference>
<reference key="3">
    <citation type="journal article" date="2005" name="Science">
        <title>The transcriptional landscape of the mammalian genome.</title>
        <authorList>
            <person name="Carninci P."/>
            <person name="Kasukawa T."/>
            <person name="Katayama S."/>
            <person name="Gough J."/>
            <person name="Frith M.C."/>
            <person name="Maeda N."/>
            <person name="Oyama R."/>
            <person name="Ravasi T."/>
            <person name="Lenhard B."/>
            <person name="Wells C."/>
            <person name="Kodzius R."/>
            <person name="Shimokawa K."/>
            <person name="Bajic V.B."/>
            <person name="Brenner S.E."/>
            <person name="Batalov S."/>
            <person name="Forrest A.R."/>
            <person name="Zavolan M."/>
            <person name="Davis M.J."/>
            <person name="Wilming L.G."/>
            <person name="Aidinis V."/>
            <person name="Allen J.E."/>
            <person name="Ambesi-Impiombato A."/>
            <person name="Apweiler R."/>
            <person name="Aturaliya R.N."/>
            <person name="Bailey T.L."/>
            <person name="Bansal M."/>
            <person name="Baxter L."/>
            <person name="Beisel K.W."/>
            <person name="Bersano T."/>
            <person name="Bono H."/>
            <person name="Chalk A.M."/>
            <person name="Chiu K.P."/>
            <person name="Choudhary V."/>
            <person name="Christoffels A."/>
            <person name="Clutterbuck D.R."/>
            <person name="Crowe M.L."/>
            <person name="Dalla E."/>
            <person name="Dalrymple B.P."/>
            <person name="de Bono B."/>
            <person name="Della Gatta G."/>
            <person name="di Bernardo D."/>
            <person name="Down T."/>
            <person name="Engstrom P."/>
            <person name="Fagiolini M."/>
            <person name="Faulkner G."/>
            <person name="Fletcher C.F."/>
            <person name="Fukushima T."/>
            <person name="Furuno M."/>
            <person name="Futaki S."/>
            <person name="Gariboldi M."/>
            <person name="Georgii-Hemming P."/>
            <person name="Gingeras T.R."/>
            <person name="Gojobori T."/>
            <person name="Green R.E."/>
            <person name="Gustincich S."/>
            <person name="Harbers M."/>
            <person name="Hayashi Y."/>
            <person name="Hensch T.K."/>
            <person name="Hirokawa N."/>
            <person name="Hill D."/>
            <person name="Huminiecki L."/>
            <person name="Iacono M."/>
            <person name="Ikeo K."/>
            <person name="Iwama A."/>
            <person name="Ishikawa T."/>
            <person name="Jakt M."/>
            <person name="Kanapin A."/>
            <person name="Katoh M."/>
            <person name="Kawasawa Y."/>
            <person name="Kelso J."/>
            <person name="Kitamura H."/>
            <person name="Kitano H."/>
            <person name="Kollias G."/>
            <person name="Krishnan S.P."/>
            <person name="Kruger A."/>
            <person name="Kummerfeld S.K."/>
            <person name="Kurochkin I.V."/>
            <person name="Lareau L.F."/>
            <person name="Lazarevic D."/>
            <person name="Lipovich L."/>
            <person name="Liu J."/>
            <person name="Liuni S."/>
            <person name="McWilliam S."/>
            <person name="Madan Babu M."/>
            <person name="Madera M."/>
            <person name="Marchionni L."/>
            <person name="Matsuda H."/>
            <person name="Matsuzawa S."/>
            <person name="Miki H."/>
            <person name="Mignone F."/>
            <person name="Miyake S."/>
            <person name="Morris K."/>
            <person name="Mottagui-Tabar S."/>
            <person name="Mulder N."/>
            <person name="Nakano N."/>
            <person name="Nakauchi H."/>
            <person name="Ng P."/>
            <person name="Nilsson R."/>
            <person name="Nishiguchi S."/>
            <person name="Nishikawa S."/>
            <person name="Nori F."/>
            <person name="Ohara O."/>
            <person name="Okazaki Y."/>
            <person name="Orlando V."/>
            <person name="Pang K.C."/>
            <person name="Pavan W.J."/>
            <person name="Pavesi G."/>
            <person name="Pesole G."/>
            <person name="Petrovsky N."/>
            <person name="Piazza S."/>
            <person name="Reed J."/>
            <person name="Reid J.F."/>
            <person name="Ring B.Z."/>
            <person name="Ringwald M."/>
            <person name="Rost B."/>
            <person name="Ruan Y."/>
            <person name="Salzberg S.L."/>
            <person name="Sandelin A."/>
            <person name="Schneider C."/>
            <person name="Schoenbach C."/>
            <person name="Sekiguchi K."/>
            <person name="Semple C.A."/>
            <person name="Seno S."/>
            <person name="Sessa L."/>
            <person name="Sheng Y."/>
            <person name="Shibata Y."/>
            <person name="Shimada H."/>
            <person name="Shimada K."/>
            <person name="Silva D."/>
            <person name="Sinclair B."/>
            <person name="Sperling S."/>
            <person name="Stupka E."/>
            <person name="Sugiura K."/>
            <person name="Sultana R."/>
            <person name="Takenaka Y."/>
            <person name="Taki K."/>
            <person name="Tammoja K."/>
            <person name="Tan S.L."/>
            <person name="Tang S."/>
            <person name="Taylor M.S."/>
            <person name="Tegner J."/>
            <person name="Teichmann S.A."/>
            <person name="Ueda H.R."/>
            <person name="van Nimwegen E."/>
            <person name="Verardo R."/>
            <person name="Wei C.L."/>
            <person name="Yagi K."/>
            <person name="Yamanishi H."/>
            <person name="Zabarovsky E."/>
            <person name="Zhu S."/>
            <person name="Zimmer A."/>
            <person name="Hide W."/>
            <person name="Bult C."/>
            <person name="Grimmond S.M."/>
            <person name="Teasdale R.D."/>
            <person name="Liu E.T."/>
            <person name="Brusic V."/>
            <person name="Quackenbush J."/>
            <person name="Wahlestedt C."/>
            <person name="Mattick J.S."/>
            <person name="Hume D.A."/>
            <person name="Kai C."/>
            <person name="Sasaki D."/>
            <person name="Tomaru Y."/>
            <person name="Fukuda S."/>
            <person name="Kanamori-Katayama M."/>
            <person name="Suzuki M."/>
            <person name="Aoki J."/>
            <person name="Arakawa T."/>
            <person name="Iida J."/>
            <person name="Imamura K."/>
            <person name="Itoh M."/>
            <person name="Kato T."/>
            <person name="Kawaji H."/>
            <person name="Kawagashira N."/>
            <person name="Kawashima T."/>
            <person name="Kojima M."/>
            <person name="Kondo S."/>
            <person name="Konno H."/>
            <person name="Nakano K."/>
            <person name="Ninomiya N."/>
            <person name="Nishio T."/>
            <person name="Okada M."/>
            <person name="Plessy C."/>
            <person name="Shibata K."/>
            <person name="Shiraki T."/>
            <person name="Suzuki S."/>
            <person name="Tagami M."/>
            <person name="Waki K."/>
            <person name="Watahiki A."/>
            <person name="Okamura-Oho Y."/>
            <person name="Suzuki H."/>
            <person name="Kawai J."/>
            <person name="Hayashizaki Y."/>
        </authorList>
    </citation>
    <scope>NUCLEOTIDE SEQUENCE [LARGE SCALE MRNA] OF 1-869 AND 881-1909</scope>
    <source>
        <strain>C57BL/6J</strain>
        <strain>NOD</strain>
        <tissue>Bone marrow</tissue>
        <tissue>Retina</tissue>
        <tissue>Spleen</tissue>
    </source>
</reference>
<reference key="4">
    <citation type="journal article" date="2004" name="Genome Res.">
        <title>The status, quality, and expansion of the NIH full-length cDNA project: the Mammalian Gene Collection (MGC).</title>
        <authorList>
            <consortium name="The MGC Project Team"/>
        </authorList>
    </citation>
    <scope>NUCLEOTIDE SEQUENCE [LARGE SCALE MRNA] OF 1316-1909</scope>
</reference>
<reference key="5">
    <citation type="journal article" date="2010" name="Cell">
        <title>A tissue-specific atlas of mouse protein phosphorylation and expression.</title>
        <authorList>
            <person name="Huttlin E.L."/>
            <person name="Jedrychowski M.P."/>
            <person name="Elias J.E."/>
            <person name="Goswami T."/>
            <person name="Rad R."/>
            <person name="Beausoleil S.A."/>
            <person name="Villen J."/>
            <person name="Haas W."/>
            <person name="Sowa M.E."/>
            <person name="Gygi S.P."/>
        </authorList>
    </citation>
    <scope>IDENTIFICATION BY MASS SPECTROMETRY [LARGE SCALE ANALYSIS]</scope>
    <source>
        <tissue>Brain</tissue>
        <tissue>Brown adipose tissue</tissue>
        <tissue>Heart</tissue>
        <tissue>Kidney</tissue>
        <tissue>Liver</tissue>
        <tissue>Lung</tissue>
        <tissue>Pancreas</tissue>
        <tissue>Spleen</tissue>
        <tissue>Testis</tissue>
    </source>
</reference>
<reference key="6">
    <citation type="journal article" date="2019" name="Nat. Cell Biol.">
        <title>Mitochondria-localised ZNFX1 functions as a dsRNA sensor to initiate antiviral responses through MAVS.</title>
        <authorList>
            <person name="Wang Y."/>
            <person name="Yuan S."/>
            <person name="Jia X."/>
            <person name="Ge Y."/>
            <person name="Ling T."/>
            <person name="Nie M."/>
            <person name="Lan X."/>
            <person name="Chen S."/>
            <person name="Xu A."/>
        </authorList>
    </citation>
    <scope>FUNCTION</scope>
    <scope>SUBCELLULAR LOCATION</scope>
    <scope>INTERACTION WITH MAVS</scope>
    <scope>INDUCTION</scope>
    <scope>DISRUPTION PHENOTYPE</scope>
</reference>
<sequence>MEDRRPHLEARPRNPPANHRGPMDGELPPRARNQTNNPAATNHAGRHLRASNHPAPFRQREERFRAMGRNPHQGRRNQEGHTSDEARDQRQSQNDTRRRNDDQEGRSHRPPWSSDTFQQWHTPPQKPGEQPQQTKRLGYKFLESLLQKEPSEVAITLATSLGLKELLSHSSMKPSFLQLICQVLRKACSSRIDRQSILHVLGILNNSKFLRVCLPAYVVGMITEPSPDIRNQYPEHISNIISLLQDLVSVFPASSMQETSMLISLLPTSLNALRASGVDIEEETEKNLEKVQAIIKYLQEKRRQGSLRVDTYTLVQAEAEGEVESYRAMPIYPTYNEVHLDEKPFLRPNIISGKYESTAVYLDTHFRLLREDFVRPLREGILKLLQSFEDQCLRKRKFDDIRIYFDARIITPMCSASGIVYKVQFDTKPLKLVRWQNSKRLLYGSLVCMSKDNFETFLFATVSNREHEDLCQGIVQLCFNEQSQQLLADVQPSDSFLMVETTAYFEAYRHVLEGLQEVQEEDVPFQRNIVQCDSYVRNPRYLLMGGRYDFTPLMENPSAMRKSLRGAEALRHPRINVFDFGQWPSKEALKLDDSQMEALQFALTKELAIIQGPPGTGKTYVGLKIVQALLTNKSVWQINTQTFPILVVCYTNHALDQFLEGIYGCQKTSIVRVGGRSNSEILKQFTLRELRNKREFRRTLPMHLRRAYMSIVTEMKESEQKLQEGAQTLECTMHGVLREQHLEKYISAQHWESLMSGPVQDADWVCVQPSKHSMILEWLGLGVGSFTQSASPAGPENTAQAEGEEEEEGEEEGSLIEIAEEADLIQADRVIEEEEVVRPRRRKKEENGTDQELAKMLLAMRLDQEVPGTTAGPEQATEEWETQRGQKKKMKRRVKVELRKLNTMTKAEANGIQDVWQLDLSSRWQLYRLWLQMYQADTRRRILSYERQYRTWAERMAELRLQEDLHILKDAEVVGMTTTGAAKYRQILQQVEPRIVIVEEAAEVLEAHTIATLSKACQHLILIGDHQQLRPSANVYDLAKNFNLEVSLFERLVKVNIPFVRLNYQHRMRPEIARLLTPHIYQDLENHPSVLKYEQIKGVSSNLFFVEHNFPEQEIQEGKSHQNQHEAHFVVELCQYLLCQEYLPSQITILTTYTGQLFCLRKLMPVKTFAGIKVHVVDKYQGEENDIILLSLVRSNQEGKVGFLQIPNRICVALSRAKKGMYCIGNMQMLAKVPLWSRIIHTLRENNQIGPSLRLCCQNHPETHTLVSKASDFQKVPEGGCSRPCEFRLACGHVCTRACHPYDSSHKEFQCMKPCQKVLCQDGHRCPNVCFQECQPCQVKVPKIILKCGHKQMVPCSMSESEFCCQEPCSKILRCGHRCSHLCGEDCVRLCSERVTVELKCGHSQLVKCGNVEDIKYGLPVKCTTKCDTTLDCGHPCPGSCHSCFEGRFHERCQQPCKRLLICSHKCQEPCTGECPPCQRTCQNRCVHSQCKKKCGELCSPCVEPCVWRCQHYQCTKLCSEPCNRPPCYVPCTKLLACGHPCIGLCGEPCPKKCRVCQPDEVTQIFFGFEDEPDARFVQLEDCSHIFEVQALDRFMNEQKDDEVAIKLKVCPICQVPIRKNLRYGTSIKQRLEEIEIVKEKIQGSAGEISTSQEQLKALLKSKTLFHQLRPEEFLILQEKLAQKNLSVKDLGLVENSIRFYDHLANLEGSLEKVHCGEQQSVRTRLEQVHEWLAKKRLSFSSQELSDLQSEIQRLTYLVNLLMRCKMAEKVKGSIAEEVSSIRNILEKTSKFTQEDEQLVQKKMDALKTTLPCSGLGISDEERVQIVTAMGVPRGHWFKCPNGHIYVITECGGAMQRSTCPECQEVIGGENHTLERSNHLASEMDGAQHPAWSNTANNFMNFEEIHRMM</sequence>
<gene>
    <name evidence="6 8" type="primary">Znfx1</name>
</gene>
<name>ZNFX1_MOUSE</name>
<protein>
    <recommendedName>
        <fullName evidence="7">NFX1-type zinc finger-containing protein 1</fullName>
    </recommendedName>
</protein>
<comment type="function">
    <text evidence="1 5">RNA-binding protein that initiates the antiviral response and is required to restrict the replication of RNA viruses (PubMed:31685995). Acts as a double-stranded RNA (dsRNA) sensor that recognizes viral RNA and then interacts with MAVS to initiate the type I interferon response (PubMed:31685995). Also required for immunity against some bacteria, such as mycobacteria (By similarity).</text>
</comment>
<comment type="subunit">
    <text evidence="5">Interacts with MAVS.</text>
</comment>
<comment type="subcellular location">
    <subcellularLocation>
        <location evidence="5">Mitochondrion outer membrane</location>
    </subcellularLocation>
    <subcellularLocation>
        <location evidence="1">Cytoplasm</location>
        <location evidence="1">Stress granule</location>
    </subcellularLocation>
</comment>
<comment type="induction">
    <text evidence="5">By interferons (IFNs) (PubMed:31685995). Expression is induced upon viral infection (PubMed:31685995).</text>
</comment>
<comment type="disruption phenotype">
    <text evidence="5">Mice are viable without obvious physiological or behavioral abnormalities (PubMed:31685995). They however display impaired innate immune responses against RNA virus infection by producing less type I interferons (IFNs) (PubMed:31685995).</text>
</comment>
<comment type="similarity">
    <text evidence="7">Belongs to the ZNFX1 family.</text>
</comment>
<comment type="sequence caution" evidence="7">
    <conflict type="erroneous initiation">
        <sequence resource="EMBL-CDS" id="AAH25488"/>
    </conflict>
</comment>
<comment type="sequence caution" evidence="7">
    <conflict type="erroneous initiation">
        <sequence resource="EMBL-CDS" id="BAE34040"/>
    </conflict>
</comment>
<organism>
    <name type="scientific">Mus musculus</name>
    <name type="common">Mouse</name>
    <dbReference type="NCBI Taxonomy" id="10090"/>
    <lineage>
        <taxon>Eukaryota</taxon>
        <taxon>Metazoa</taxon>
        <taxon>Chordata</taxon>
        <taxon>Craniata</taxon>
        <taxon>Vertebrata</taxon>
        <taxon>Euteleostomi</taxon>
        <taxon>Mammalia</taxon>
        <taxon>Eutheria</taxon>
        <taxon>Euarchontoglires</taxon>
        <taxon>Glires</taxon>
        <taxon>Rodentia</taxon>
        <taxon>Myomorpha</taxon>
        <taxon>Muroidea</taxon>
        <taxon>Muridae</taxon>
        <taxon>Murinae</taxon>
        <taxon>Mus</taxon>
        <taxon>Mus</taxon>
    </lineage>
</organism>
<dbReference type="EMBL" id="AL591711">
    <property type="status" value="NOT_ANNOTATED_CDS"/>
    <property type="molecule type" value="Genomic_DNA"/>
</dbReference>
<dbReference type="EMBL" id="CH466551">
    <property type="protein sequence ID" value="EDL06496.1"/>
    <property type="molecule type" value="Genomic_DNA"/>
</dbReference>
<dbReference type="EMBL" id="AK149249">
    <property type="protein sequence ID" value="BAE28771.1"/>
    <property type="molecule type" value="mRNA"/>
</dbReference>
<dbReference type="EMBL" id="AK150223">
    <property type="protein sequence ID" value="BAE29390.1"/>
    <property type="molecule type" value="mRNA"/>
</dbReference>
<dbReference type="EMBL" id="AK157301">
    <property type="protein sequence ID" value="BAE34040.1"/>
    <property type="status" value="ALT_INIT"/>
    <property type="molecule type" value="mRNA"/>
</dbReference>
<dbReference type="EMBL" id="BC025488">
    <property type="protein sequence ID" value="AAH25488.1"/>
    <property type="status" value="ALT_INIT"/>
    <property type="molecule type" value="mRNA"/>
</dbReference>
<dbReference type="CCDS" id="CCDS38337.1"/>
<dbReference type="RefSeq" id="NP_001028368.2">
    <property type="nucleotide sequence ID" value="NM_001033196.3"/>
</dbReference>
<dbReference type="RefSeq" id="NP_001411598.1">
    <property type="nucleotide sequence ID" value="NM_001424669.1"/>
</dbReference>
<dbReference type="RefSeq" id="NP_001411605.1">
    <property type="nucleotide sequence ID" value="NM_001424676.1"/>
</dbReference>
<dbReference type="RefSeq" id="XP_006500519.1">
    <property type="nucleotide sequence ID" value="XM_006500456.3"/>
</dbReference>
<dbReference type="SMR" id="Q8R151"/>
<dbReference type="BioGRID" id="221166">
    <property type="interactions" value="6"/>
</dbReference>
<dbReference type="FunCoup" id="Q8R151">
    <property type="interactions" value="1728"/>
</dbReference>
<dbReference type="IntAct" id="Q8R151">
    <property type="interactions" value="1"/>
</dbReference>
<dbReference type="STRING" id="10090.ENSMUSP00000049404"/>
<dbReference type="GlyGen" id="Q8R151">
    <property type="glycosylation" value="3 sites, 3 N-linked glycans (3 sites)"/>
</dbReference>
<dbReference type="iPTMnet" id="Q8R151"/>
<dbReference type="PhosphoSitePlus" id="Q8R151"/>
<dbReference type="SwissPalm" id="Q8R151"/>
<dbReference type="jPOST" id="Q8R151"/>
<dbReference type="PaxDb" id="10090-ENSMUSP00000049404"/>
<dbReference type="PeptideAtlas" id="Q8R151"/>
<dbReference type="ProteomicsDB" id="275151"/>
<dbReference type="Pumba" id="Q8R151"/>
<dbReference type="Antibodypedia" id="28464">
    <property type="antibodies" value="23 antibodies from 8 providers"/>
</dbReference>
<dbReference type="Ensembl" id="ENSMUST00000048988.14">
    <property type="protein sequence ID" value="ENSMUSP00000049404.8"/>
    <property type="gene ID" value="ENSMUSG00000039501.15"/>
</dbReference>
<dbReference type="GeneID" id="98999"/>
<dbReference type="KEGG" id="mmu:98999"/>
<dbReference type="UCSC" id="uc008nzc.2">
    <property type="organism name" value="mouse"/>
</dbReference>
<dbReference type="AGR" id="MGI:2138982"/>
<dbReference type="CTD" id="57169"/>
<dbReference type="MGI" id="MGI:2138982">
    <property type="gene designation" value="Znfx1"/>
</dbReference>
<dbReference type="VEuPathDB" id="HostDB:ENSMUSG00000039501"/>
<dbReference type="eggNOG" id="KOG1807">
    <property type="taxonomic scope" value="Eukaryota"/>
</dbReference>
<dbReference type="GeneTree" id="ENSGT00940000155154"/>
<dbReference type="HOGENOM" id="CLU_001066_0_1_1"/>
<dbReference type="InParanoid" id="Q8R151"/>
<dbReference type="OMA" id="PVCQVPI"/>
<dbReference type="OrthoDB" id="2423195at2759"/>
<dbReference type="PhylomeDB" id="Q8R151"/>
<dbReference type="TreeFam" id="TF323611"/>
<dbReference type="BioGRID-ORCS" id="98999">
    <property type="hits" value="2 hits in 80 CRISPR screens"/>
</dbReference>
<dbReference type="ChiTaRS" id="Znfx1">
    <property type="organism name" value="mouse"/>
</dbReference>
<dbReference type="PRO" id="PR:Q8R151"/>
<dbReference type="Proteomes" id="UP000000589">
    <property type="component" value="Chromosome 2"/>
</dbReference>
<dbReference type="RNAct" id="Q8R151">
    <property type="molecule type" value="protein"/>
</dbReference>
<dbReference type="Bgee" id="ENSMUSG00000039501">
    <property type="expression patterns" value="Expressed in animal zygote and 232 other cell types or tissues"/>
</dbReference>
<dbReference type="ExpressionAtlas" id="Q8R151">
    <property type="expression patterns" value="baseline and differential"/>
</dbReference>
<dbReference type="GO" id="GO:0010494">
    <property type="term" value="C:cytoplasmic stress granule"/>
    <property type="evidence" value="ECO:0000250"/>
    <property type="project" value="UniProtKB"/>
</dbReference>
<dbReference type="GO" id="GO:0005741">
    <property type="term" value="C:mitochondrial outer membrane"/>
    <property type="evidence" value="ECO:0000314"/>
    <property type="project" value="UniProtKB"/>
</dbReference>
<dbReference type="GO" id="GO:0005634">
    <property type="term" value="C:nucleus"/>
    <property type="evidence" value="ECO:0007669"/>
    <property type="project" value="InterPro"/>
</dbReference>
<dbReference type="GO" id="GO:0004386">
    <property type="term" value="F:helicase activity"/>
    <property type="evidence" value="ECO:0007669"/>
    <property type="project" value="InterPro"/>
</dbReference>
<dbReference type="GO" id="GO:0003723">
    <property type="term" value="F:RNA binding"/>
    <property type="evidence" value="ECO:0000314"/>
    <property type="project" value="UniProtKB"/>
</dbReference>
<dbReference type="GO" id="GO:0008270">
    <property type="term" value="F:zinc ion binding"/>
    <property type="evidence" value="ECO:0007669"/>
    <property type="project" value="UniProtKB-KW"/>
</dbReference>
<dbReference type="GO" id="GO:0002218">
    <property type="term" value="P:activation of innate immune response"/>
    <property type="evidence" value="ECO:0000315"/>
    <property type="project" value="UniProtKB"/>
</dbReference>
<dbReference type="GO" id="GO:0042742">
    <property type="term" value="P:defense response to bacterium"/>
    <property type="evidence" value="ECO:0000250"/>
    <property type="project" value="UniProtKB"/>
</dbReference>
<dbReference type="GO" id="GO:0051607">
    <property type="term" value="P:defense response to virus"/>
    <property type="evidence" value="ECO:0000315"/>
    <property type="project" value="UniProtKB"/>
</dbReference>
<dbReference type="GO" id="GO:0045087">
    <property type="term" value="P:innate immune response"/>
    <property type="evidence" value="ECO:0007669"/>
    <property type="project" value="UniProtKB-KW"/>
</dbReference>
<dbReference type="GO" id="GO:0045071">
    <property type="term" value="P:negative regulation of viral genome replication"/>
    <property type="evidence" value="ECO:0000315"/>
    <property type="project" value="UniProtKB"/>
</dbReference>
<dbReference type="CDD" id="cd17936">
    <property type="entry name" value="EEXXEc_NFX1"/>
    <property type="match status" value="1"/>
</dbReference>
<dbReference type="CDD" id="cd06008">
    <property type="entry name" value="NF-X1-zinc-finger"/>
    <property type="match status" value="1"/>
</dbReference>
<dbReference type="CDD" id="cd18808">
    <property type="entry name" value="SF1_C_Upf1"/>
    <property type="match status" value="1"/>
</dbReference>
<dbReference type="FunFam" id="3.40.50.300:FF:000742">
    <property type="entry name" value="NFX1-type zinc finger-containing protein 1"/>
    <property type="match status" value="1"/>
</dbReference>
<dbReference type="FunFam" id="3.40.50.300:FF:001096">
    <property type="entry name" value="Zinc finger NFX1-type containing 1"/>
    <property type="match status" value="1"/>
</dbReference>
<dbReference type="FunFam" id="3.40.50.300:FF:001140">
    <property type="entry name" value="Zinc finger NFX1-type containing 1"/>
    <property type="match status" value="1"/>
</dbReference>
<dbReference type="Gene3D" id="3.40.50.300">
    <property type="entry name" value="P-loop containing nucleotide triphosphate hydrolases"/>
    <property type="match status" value="3"/>
</dbReference>
<dbReference type="InterPro" id="IPR045055">
    <property type="entry name" value="DNA2/NAM7-like"/>
</dbReference>
<dbReference type="InterPro" id="IPR041679">
    <property type="entry name" value="DNA2/NAM7-like_C"/>
</dbReference>
<dbReference type="InterPro" id="IPR041677">
    <property type="entry name" value="DNA2/NAM7_AAA_11"/>
</dbReference>
<dbReference type="InterPro" id="IPR027417">
    <property type="entry name" value="P-loop_NTPase"/>
</dbReference>
<dbReference type="InterPro" id="IPR047187">
    <property type="entry name" value="SF1_C_Upf1"/>
</dbReference>
<dbReference type="InterPro" id="IPR046439">
    <property type="entry name" value="ZF_RZ_dom"/>
</dbReference>
<dbReference type="InterPro" id="IPR000967">
    <property type="entry name" value="Znf_NFX1"/>
</dbReference>
<dbReference type="PANTHER" id="PTHR10887">
    <property type="entry name" value="DNA2/NAM7 HELICASE FAMILY"/>
    <property type="match status" value="1"/>
</dbReference>
<dbReference type="PANTHER" id="PTHR10887:SF341">
    <property type="entry name" value="NFX1-TYPE ZINC FINGER-CONTAINING PROTEIN 1"/>
    <property type="match status" value="1"/>
</dbReference>
<dbReference type="Pfam" id="PF13086">
    <property type="entry name" value="AAA_11"/>
    <property type="match status" value="1"/>
</dbReference>
<dbReference type="Pfam" id="PF13087">
    <property type="entry name" value="AAA_12"/>
    <property type="match status" value="1"/>
</dbReference>
<dbReference type="Pfam" id="PF20173">
    <property type="entry name" value="ZnF_RZ-type"/>
    <property type="match status" value="1"/>
</dbReference>
<dbReference type="Pfam" id="PF25396">
    <property type="entry name" value="ZNFX1"/>
    <property type="match status" value="1"/>
</dbReference>
<dbReference type="SMART" id="SM00438">
    <property type="entry name" value="ZnF_NFX"/>
    <property type="match status" value="5"/>
</dbReference>
<dbReference type="SUPFAM" id="SSF52540">
    <property type="entry name" value="P-loop containing nucleoside triphosphate hydrolases"/>
    <property type="match status" value="1"/>
</dbReference>
<dbReference type="PROSITE" id="PS51981">
    <property type="entry name" value="ZF_RZ"/>
    <property type="match status" value="1"/>
</dbReference>
<feature type="chain" id="PRO_0000050796" description="NFX1-type zinc finger-containing protein 1">
    <location>
        <begin position="1"/>
        <end position="1909"/>
    </location>
</feature>
<feature type="zinc finger region" description="NF-X1-type 1">
    <location>
        <begin position="1291"/>
        <end position="1313"/>
    </location>
</feature>
<feature type="zinc finger region" description="NF-X1-type 2">
    <location>
        <begin position="1375"/>
        <end position="1393"/>
    </location>
</feature>
<feature type="zinc finger region" description="NF-X1-type 3">
    <location>
        <begin position="1433"/>
        <end position="1455"/>
    </location>
</feature>
<feature type="zinc finger region" description="NF-X1-type 4">
    <location>
        <begin position="1463"/>
        <end position="1480"/>
    </location>
</feature>
<feature type="zinc finger region" description="RZ-type" evidence="3">
    <location>
        <begin position="1818"/>
        <end position="1889"/>
    </location>
</feature>
<feature type="region of interest" description="Disordered" evidence="4">
    <location>
        <begin position="1"/>
        <end position="133"/>
    </location>
</feature>
<feature type="region of interest" description="Disordered" evidence="4">
    <location>
        <begin position="787"/>
        <end position="813"/>
    </location>
</feature>
<feature type="coiled-coil region" evidence="2">
    <location>
        <begin position="939"/>
        <end position="964"/>
    </location>
</feature>
<feature type="coiled-coil region" evidence="2">
    <location>
        <begin position="1733"/>
        <end position="1764"/>
    </location>
</feature>
<feature type="compositionally biased region" description="Basic and acidic residues" evidence="4">
    <location>
        <begin position="1"/>
        <end position="12"/>
    </location>
</feature>
<feature type="compositionally biased region" description="Basic and acidic residues" evidence="4">
    <location>
        <begin position="76"/>
        <end position="107"/>
    </location>
</feature>
<feature type="compositionally biased region" description="Polar residues" evidence="4">
    <location>
        <begin position="113"/>
        <end position="122"/>
    </location>
</feature>
<feature type="compositionally biased region" description="Acidic residues" evidence="4">
    <location>
        <begin position="802"/>
        <end position="813"/>
    </location>
</feature>
<feature type="binding site" evidence="3">
    <location>
        <position position="1840"/>
    </location>
    <ligand>
        <name>Zn(2+)</name>
        <dbReference type="ChEBI" id="CHEBI:29105"/>
    </ligand>
</feature>
<feature type="binding site" evidence="3">
    <location>
        <position position="1844"/>
    </location>
    <ligand>
        <name>Zn(2+)</name>
        <dbReference type="ChEBI" id="CHEBI:29105"/>
    </ligand>
</feature>
<feature type="binding site" evidence="3">
    <location>
        <position position="1860"/>
    </location>
    <ligand>
        <name>Zn(2+)</name>
        <dbReference type="ChEBI" id="CHEBI:29105"/>
    </ligand>
</feature>
<feature type="binding site" evidence="3">
    <location>
        <position position="1863"/>
    </location>
    <ligand>
        <name>Zn(2+)</name>
        <dbReference type="ChEBI" id="CHEBI:29105"/>
    </ligand>
</feature>
<feature type="sequence conflict" description="In Ref. 3; BAE29390." evidence="7" ref="3">
    <original>V</original>
    <variation>I</variation>
    <location>
        <position position="212"/>
    </location>
</feature>
<feature type="sequence conflict" description="In Ref. 3; BAE29390." evidence="7" ref="3">
    <original>R</original>
    <variation>G</variation>
    <location>
        <position position="394"/>
    </location>
</feature>
<feature type="sequence conflict" description="In Ref. 3; BAE34040." evidence="7" ref="3">
    <original>V</original>
    <variation>L</variation>
    <location>
        <position position="1130"/>
    </location>
</feature>
<feature type="sequence conflict" description="In Ref. 3; BAE34040." evidence="7" ref="3">
    <original>T</original>
    <variation>N</variation>
    <location>
        <position position="1793"/>
    </location>
</feature>
<proteinExistence type="evidence at protein level"/>
<accession>Q8R151</accession>
<accession>A2A5R3</accession>
<accession>Q3U016</accession>
<accession>Q3UD71</accession>
<accession>Q3UEZ0</accession>
<keyword id="KW-0051">Antiviral defense</keyword>
<keyword id="KW-0175">Coiled coil</keyword>
<keyword id="KW-0963">Cytoplasm</keyword>
<keyword id="KW-0391">Immunity</keyword>
<keyword id="KW-0399">Innate immunity</keyword>
<keyword id="KW-0472">Membrane</keyword>
<keyword id="KW-0479">Metal-binding</keyword>
<keyword id="KW-0496">Mitochondrion</keyword>
<keyword id="KW-1000">Mitochondrion outer membrane</keyword>
<keyword id="KW-1185">Reference proteome</keyword>
<keyword id="KW-0677">Repeat</keyword>
<keyword id="KW-0694">RNA-binding</keyword>
<keyword id="KW-0862">Zinc</keyword>
<keyword id="KW-0863">Zinc-finger</keyword>
<evidence type="ECO:0000250" key="1">
    <source>
        <dbReference type="UniProtKB" id="Q9P2E3"/>
    </source>
</evidence>
<evidence type="ECO:0000255" key="2"/>
<evidence type="ECO:0000255" key="3">
    <source>
        <dbReference type="PROSITE-ProRule" id="PRU01325"/>
    </source>
</evidence>
<evidence type="ECO:0000256" key="4">
    <source>
        <dbReference type="SAM" id="MobiDB-lite"/>
    </source>
</evidence>
<evidence type="ECO:0000269" key="5">
    <source>
    </source>
</evidence>
<evidence type="ECO:0000303" key="6">
    <source>
    </source>
</evidence>
<evidence type="ECO:0000305" key="7"/>
<evidence type="ECO:0000312" key="8">
    <source>
        <dbReference type="MGI" id="MGI:2138982"/>
    </source>
</evidence>